<reference key="1">
    <citation type="submission" date="2008-06" db="EMBL/GenBank/DDBJ databases">
        <title>Complete sequence of Chloroherpeton thalassium ATCC 35110.</title>
        <authorList>
            <consortium name="US DOE Joint Genome Institute"/>
            <person name="Lucas S."/>
            <person name="Copeland A."/>
            <person name="Lapidus A."/>
            <person name="Glavina del Rio T."/>
            <person name="Dalin E."/>
            <person name="Tice H."/>
            <person name="Bruce D."/>
            <person name="Goodwin L."/>
            <person name="Pitluck S."/>
            <person name="Schmutz J."/>
            <person name="Larimer F."/>
            <person name="Land M."/>
            <person name="Hauser L."/>
            <person name="Kyrpides N."/>
            <person name="Mikhailova N."/>
            <person name="Liu Z."/>
            <person name="Li T."/>
            <person name="Zhao F."/>
            <person name="Overmann J."/>
            <person name="Bryant D.A."/>
            <person name="Richardson P."/>
        </authorList>
    </citation>
    <scope>NUCLEOTIDE SEQUENCE [LARGE SCALE GENOMIC DNA]</scope>
    <source>
        <strain>ATCC 35110 / GB-78</strain>
    </source>
</reference>
<keyword id="KW-0012">Acyltransferase</keyword>
<keyword id="KW-0028">Amino-acid biosynthesis</keyword>
<keyword id="KW-0963">Cytoplasm</keyword>
<keyword id="KW-0486">Methionine biosynthesis</keyword>
<keyword id="KW-1185">Reference proteome</keyword>
<keyword id="KW-0808">Transferase</keyword>
<evidence type="ECO:0000255" key="1">
    <source>
        <dbReference type="HAMAP-Rule" id="MF_00296"/>
    </source>
</evidence>
<organism>
    <name type="scientific">Chloroherpeton thalassium (strain ATCC 35110 / GB-78)</name>
    <dbReference type="NCBI Taxonomy" id="517418"/>
    <lineage>
        <taxon>Bacteria</taxon>
        <taxon>Pseudomonadati</taxon>
        <taxon>Chlorobiota</taxon>
        <taxon>Chlorobiia</taxon>
        <taxon>Chlorobiales</taxon>
        <taxon>Chloroherpetonaceae</taxon>
        <taxon>Chloroherpeton</taxon>
    </lineage>
</organism>
<gene>
    <name evidence="1" type="primary">metXA</name>
    <name type="ordered locus">Ctha_1281</name>
</gene>
<comment type="function">
    <text evidence="1">Transfers an acetyl group from acetyl-CoA to L-homoserine, forming acetyl-L-homoserine.</text>
</comment>
<comment type="catalytic activity">
    <reaction evidence="1">
        <text>L-homoserine + acetyl-CoA = O-acetyl-L-homoserine + CoA</text>
        <dbReference type="Rhea" id="RHEA:13701"/>
        <dbReference type="ChEBI" id="CHEBI:57287"/>
        <dbReference type="ChEBI" id="CHEBI:57288"/>
        <dbReference type="ChEBI" id="CHEBI:57476"/>
        <dbReference type="ChEBI" id="CHEBI:57716"/>
        <dbReference type="EC" id="2.3.1.31"/>
    </reaction>
</comment>
<comment type="pathway">
    <text evidence="1">Amino-acid biosynthesis; L-methionine biosynthesis via de novo pathway; O-acetyl-L-homoserine from L-homoserine: step 1/1.</text>
</comment>
<comment type="subunit">
    <text evidence="1">Homodimer.</text>
</comment>
<comment type="subcellular location">
    <subcellularLocation>
        <location evidence="1">Cytoplasm</location>
    </subcellularLocation>
</comment>
<comment type="similarity">
    <text evidence="1">Belongs to the AB hydrolase superfamily. MetX family.</text>
</comment>
<dbReference type="EC" id="2.3.1.31" evidence="1"/>
<dbReference type="EMBL" id="CP001100">
    <property type="protein sequence ID" value="ACF13744.1"/>
    <property type="molecule type" value="Genomic_DNA"/>
</dbReference>
<dbReference type="SMR" id="B3QZ51"/>
<dbReference type="STRING" id="517418.Ctha_1281"/>
<dbReference type="ESTHER" id="chlt3-metx">
    <property type="family name" value="Homoserine_transacetylase"/>
</dbReference>
<dbReference type="KEGG" id="cts:Ctha_1281"/>
<dbReference type="eggNOG" id="COG2021">
    <property type="taxonomic scope" value="Bacteria"/>
</dbReference>
<dbReference type="HOGENOM" id="CLU_028760_1_2_10"/>
<dbReference type="OrthoDB" id="9800754at2"/>
<dbReference type="UniPathway" id="UPA00051">
    <property type="reaction ID" value="UER00074"/>
</dbReference>
<dbReference type="Proteomes" id="UP000001208">
    <property type="component" value="Chromosome"/>
</dbReference>
<dbReference type="GO" id="GO:0005737">
    <property type="term" value="C:cytoplasm"/>
    <property type="evidence" value="ECO:0007669"/>
    <property type="project" value="UniProtKB-SubCell"/>
</dbReference>
<dbReference type="GO" id="GO:0004414">
    <property type="term" value="F:homoserine O-acetyltransferase activity"/>
    <property type="evidence" value="ECO:0007669"/>
    <property type="project" value="UniProtKB-UniRule"/>
</dbReference>
<dbReference type="GO" id="GO:0009092">
    <property type="term" value="P:homoserine metabolic process"/>
    <property type="evidence" value="ECO:0007669"/>
    <property type="project" value="TreeGrafter"/>
</dbReference>
<dbReference type="GO" id="GO:0009086">
    <property type="term" value="P:methionine biosynthetic process"/>
    <property type="evidence" value="ECO:0007669"/>
    <property type="project" value="UniProtKB-UniRule"/>
</dbReference>
<dbReference type="Gene3D" id="3.40.50.1820">
    <property type="entry name" value="alpha/beta hydrolase"/>
    <property type="match status" value="1"/>
</dbReference>
<dbReference type="HAMAP" id="MF_00296">
    <property type="entry name" value="MetX_acyltransf"/>
    <property type="match status" value="1"/>
</dbReference>
<dbReference type="InterPro" id="IPR000073">
    <property type="entry name" value="AB_hydrolase_1"/>
</dbReference>
<dbReference type="InterPro" id="IPR029058">
    <property type="entry name" value="AB_hydrolase_fold"/>
</dbReference>
<dbReference type="InterPro" id="IPR008220">
    <property type="entry name" value="HAT_MetX-like"/>
</dbReference>
<dbReference type="NCBIfam" id="TIGR01392">
    <property type="entry name" value="homoserO_Ac_trn"/>
    <property type="match status" value="1"/>
</dbReference>
<dbReference type="NCBIfam" id="NF001209">
    <property type="entry name" value="PRK00175.1"/>
    <property type="match status" value="1"/>
</dbReference>
<dbReference type="PANTHER" id="PTHR32268">
    <property type="entry name" value="HOMOSERINE O-ACETYLTRANSFERASE"/>
    <property type="match status" value="1"/>
</dbReference>
<dbReference type="PANTHER" id="PTHR32268:SF11">
    <property type="entry name" value="HOMOSERINE O-ACETYLTRANSFERASE"/>
    <property type="match status" value="1"/>
</dbReference>
<dbReference type="Pfam" id="PF00561">
    <property type="entry name" value="Abhydrolase_1"/>
    <property type="match status" value="1"/>
</dbReference>
<dbReference type="PIRSF" id="PIRSF000443">
    <property type="entry name" value="Homoser_Ac_trans"/>
    <property type="match status" value="1"/>
</dbReference>
<dbReference type="SUPFAM" id="SSF53474">
    <property type="entry name" value="alpha/beta-Hydrolases"/>
    <property type="match status" value="1"/>
</dbReference>
<name>METXA_CHLT3</name>
<feature type="chain" id="PRO_1000115220" description="Homoserine O-acetyltransferase">
    <location>
        <begin position="1"/>
        <end position="378"/>
    </location>
</feature>
<feature type="domain" description="AB hydrolase-1" evidence="1">
    <location>
        <begin position="52"/>
        <end position="337"/>
    </location>
</feature>
<feature type="active site" description="Nucleophile" evidence="1">
    <location>
        <position position="148"/>
    </location>
</feature>
<feature type="active site" evidence="1">
    <location>
        <position position="304"/>
    </location>
</feature>
<feature type="active site" evidence="1">
    <location>
        <position position="333"/>
    </location>
</feature>
<feature type="binding site" evidence="1">
    <location>
        <position position="217"/>
    </location>
    <ligand>
        <name>substrate</name>
    </ligand>
</feature>
<feature type="binding site" evidence="1">
    <location>
        <position position="334"/>
    </location>
    <ligand>
        <name>substrate</name>
    </ligand>
</feature>
<accession>B3QZ51</accession>
<protein>
    <recommendedName>
        <fullName evidence="1">Homoserine O-acetyltransferase</fullName>
        <shortName evidence="1">HAT</shortName>
        <ecNumber evidence="1">2.3.1.31</ecNumber>
    </recommendedName>
    <alternativeName>
        <fullName evidence="1">Homoserine transacetylase</fullName>
        <shortName evidence="1">HTA</shortName>
    </alternativeName>
</protein>
<sequence length="378" mass="42436">MTQSIMRYKDFFSEKTQFANFKTPLTLEFGGTLPEYRVAYRSWGKLNKSGDNAILICHALTGSADADIWWAPLFGEGKTFDETKDFIVCSNVLGSCYGTTGPASINPETGKRFGPDFPSFTIRDMVRVQRSLLNALGVKKLKMVIGGSLGGMQALEWCAMYPDFVETQVTIASSGKHSAWCIGLSEAQRQAICADENWNGGHYTPENPPKNGLSAARMIAMCTYRTRASFETRFARSLRAKETFNVESYLLYQGEKLVERFDANAYVKLTQAMDKHDLSRNRGDYYNVLKSIDIPSLIVAINSDILYPQEEQEELVRFMPNAQFGMLYSQHGHDTFLIEMEALNKLVMAFQKQLPPEGKFLNDRSPIVSTIFGSKLGV</sequence>
<proteinExistence type="inferred from homology"/>